<reference key="1">
    <citation type="journal article" date="1993" name="J. Bacteriol.">
        <title>Cloning, sequencing, expression, and complementation analysis of the Escherichia coli K1 kps region 1 gene, kpsE, and identification of an upstream open reading frame encoding a protein with homology to GutQ.</title>
        <authorList>
            <person name="Cieslewicz M.J."/>
            <person name="Steenbergen S.M."/>
            <person name="Vimr E.R."/>
        </authorList>
    </citation>
    <scope>NUCLEOTIDE SEQUENCE [GENOMIC DNA]</scope>
    <source>
        <strain>K1</strain>
    </source>
</reference>
<gene>
    <name type="primary">kpsE</name>
</gene>
<accession>P42501</accession>
<feature type="chain" id="PRO_0000084316" description="Capsule polysaccharide export inner-membrane protein KpsE">
    <location>
        <begin position="1"/>
        <end position="382"/>
    </location>
</feature>
<feature type="transmembrane region" description="Helical" evidence="1">
    <location>
        <begin position="28"/>
        <end position="48"/>
    </location>
</feature>
<feature type="transmembrane region" description="Helical" evidence="1">
    <location>
        <begin position="357"/>
        <end position="377"/>
    </location>
</feature>
<dbReference type="EMBL" id="L19929">
    <property type="protein sequence ID" value="AAB51624.1"/>
    <property type="status" value="ALT_INIT"/>
    <property type="molecule type" value="Genomic_DNA"/>
</dbReference>
<dbReference type="SMR" id="P42501"/>
<dbReference type="DIP" id="DIP-17000N"/>
<dbReference type="IntAct" id="P42501">
    <property type="interactions" value="1"/>
</dbReference>
<dbReference type="TCDB" id="8.A.4.1.1">
    <property type="family name" value="the cytoplasmic membrane-periplasmic auxiliary-2 (mpa2) family"/>
</dbReference>
<dbReference type="GO" id="GO:0009276">
    <property type="term" value="C:Gram-negative-bacterium-type cell wall"/>
    <property type="evidence" value="ECO:0007669"/>
    <property type="project" value="InterPro"/>
</dbReference>
<dbReference type="GO" id="GO:0005886">
    <property type="term" value="C:plasma membrane"/>
    <property type="evidence" value="ECO:0007669"/>
    <property type="project" value="UniProtKB-SubCell"/>
</dbReference>
<dbReference type="GO" id="GO:0005351">
    <property type="term" value="F:carbohydrate:proton symporter activity"/>
    <property type="evidence" value="ECO:0007669"/>
    <property type="project" value="InterPro"/>
</dbReference>
<dbReference type="GO" id="GO:0004713">
    <property type="term" value="F:protein tyrosine kinase activity"/>
    <property type="evidence" value="ECO:0007669"/>
    <property type="project" value="TreeGrafter"/>
</dbReference>
<dbReference type="GO" id="GO:0015774">
    <property type="term" value="P:polysaccharide transport"/>
    <property type="evidence" value="ECO:0007669"/>
    <property type="project" value="UniProtKB-KW"/>
</dbReference>
<dbReference type="InterPro" id="IPR050445">
    <property type="entry name" value="Bact_polysacc_biosynth/exp"/>
</dbReference>
<dbReference type="InterPro" id="IPR005705">
    <property type="entry name" value="BexC_CtrB_KpsE_VexD"/>
</dbReference>
<dbReference type="NCBIfam" id="TIGR01010">
    <property type="entry name" value="BexC_CtrB_KpsE"/>
    <property type="match status" value="1"/>
</dbReference>
<dbReference type="PANTHER" id="PTHR32309:SF13">
    <property type="entry name" value="FERRIC ENTEROBACTIN TRANSPORT PROTEIN FEPE"/>
    <property type="match status" value="1"/>
</dbReference>
<dbReference type="PANTHER" id="PTHR32309">
    <property type="entry name" value="TYROSINE-PROTEIN KINASE"/>
    <property type="match status" value="1"/>
</dbReference>
<protein>
    <recommendedName>
        <fullName>Capsule polysaccharide export inner-membrane protein KpsE</fullName>
    </recommendedName>
</protein>
<proteinExistence type="inferred from homology"/>
<evidence type="ECO:0000255" key="1"/>
<evidence type="ECO:0000305" key="2"/>
<name>KPSE1_ECOLX</name>
<sequence>MLIKVKSAVSWMRARLSAISLADIQKHLAKIIILAPMAMLLIYLAIFSQPRYMSESKVAIKRSDDLNSGSLNFGLLLGASNPSSAEDALYLKEYINSPDMLAALDKQLNFREAFSHSGLDFLNHLSKDETAEGFLKYYKDRINVSYDDKTGLLNIQTTGFSPEFALKFNQTVLKESERFINEMSHRIARDQLAFAETEMEKARQRLDASKAELLSYQDNNNVLDPQAQAQAASTLVNTLMGQKIQMEADLRNLLTYLREDAPQVVSARNAIQSLQAQIDEEQSKITAPQGDKLNRMAVDFEEIKSKVEFNTELYKLTLTSIEKTRVEAARKLKVLSVISSPQLPQESSFPNIPYLIACWLLVCCLLFGTLKLLLAVIEDHRD</sequence>
<comment type="function">
    <text>Involved in the translocation of the polysialic acid capsule.</text>
</comment>
<comment type="subcellular location">
    <subcellularLocation>
        <location evidence="2">Cell inner membrane</location>
        <topology evidence="2">Multi-pass membrane protein</topology>
    </subcellularLocation>
</comment>
<comment type="similarity">
    <text evidence="2">Belongs to the BexC/CtrB/KpsE family.</text>
</comment>
<comment type="sequence caution" evidence="2">
    <conflict type="erroneous initiation">
        <sequence resource="EMBL-CDS" id="AAB51624"/>
    </conflict>
</comment>
<keyword id="KW-0972">Capsule biogenesis/degradation</keyword>
<keyword id="KW-0997">Cell inner membrane</keyword>
<keyword id="KW-1003">Cell membrane</keyword>
<keyword id="KW-0472">Membrane</keyword>
<keyword id="KW-0625">Polysaccharide transport</keyword>
<keyword id="KW-0762">Sugar transport</keyword>
<keyword id="KW-0812">Transmembrane</keyword>
<keyword id="KW-1133">Transmembrane helix</keyword>
<keyword id="KW-0813">Transport</keyword>
<organism>
    <name type="scientific">Escherichia coli</name>
    <dbReference type="NCBI Taxonomy" id="562"/>
    <lineage>
        <taxon>Bacteria</taxon>
        <taxon>Pseudomonadati</taxon>
        <taxon>Pseudomonadota</taxon>
        <taxon>Gammaproteobacteria</taxon>
        <taxon>Enterobacterales</taxon>
        <taxon>Enterobacteriaceae</taxon>
        <taxon>Escherichia</taxon>
    </lineage>
</organism>